<organism>
    <name type="scientific">Vibrio parahaemolyticus serotype O3:K6 (strain RIMD 2210633)</name>
    <dbReference type="NCBI Taxonomy" id="223926"/>
    <lineage>
        <taxon>Bacteria</taxon>
        <taxon>Pseudomonadati</taxon>
        <taxon>Pseudomonadota</taxon>
        <taxon>Gammaproteobacteria</taxon>
        <taxon>Vibrionales</taxon>
        <taxon>Vibrionaceae</taxon>
        <taxon>Vibrio</taxon>
    </lineage>
</organism>
<reference key="1">
    <citation type="journal article" date="2003" name="Lancet">
        <title>Genome sequence of Vibrio parahaemolyticus: a pathogenic mechanism distinct from that of V. cholerae.</title>
        <authorList>
            <person name="Makino K."/>
            <person name="Oshima K."/>
            <person name="Kurokawa K."/>
            <person name="Yokoyama K."/>
            <person name="Uda T."/>
            <person name="Tagomori K."/>
            <person name="Iijima Y."/>
            <person name="Najima M."/>
            <person name="Nakano M."/>
            <person name="Yamashita A."/>
            <person name="Kubota Y."/>
            <person name="Kimura S."/>
            <person name="Yasunaga T."/>
            <person name="Honda T."/>
            <person name="Shinagawa H."/>
            <person name="Hattori M."/>
            <person name="Iida T."/>
        </authorList>
    </citation>
    <scope>NUCLEOTIDE SEQUENCE [LARGE SCALE GENOMIC DNA]</scope>
    <source>
        <strain>RIMD 2210633</strain>
    </source>
</reference>
<gene>
    <name evidence="1" type="primary">rplB</name>
    <name type="ordered locus">VP0260</name>
</gene>
<name>RL2_VIBPA</name>
<accession>Q87T10</accession>
<protein>
    <recommendedName>
        <fullName evidence="1">Large ribosomal subunit protein uL2</fullName>
    </recommendedName>
    <alternativeName>
        <fullName evidence="3">50S ribosomal protein L2</fullName>
    </alternativeName>
</protein>
<feature type="chain" id="PRO_0000129648" description="Large ribosomal subunit protein uL2">
    <location>
        <begin position="1"/>
        <end position="274"/>
    </location>
</feature>
<feature type="region of interest" description="Disordered" evidence="2">
    <location>
        <begin position="223"/>
        <end position="265"/>
    </location>
</feature>
<feature type="compositionally biased region" description="Basic residues" evidence="2">
    <location>
        <begin position="256"/>
        <end position="265"/>
    </location>
</feature>
<proteinExistence type="inferred from homology"/>
<comment type="function">
    <text evidence="1">One of the primary rRNA binding proteins. Required for association of the 30S and 50S subunits to form the 70S ribosome, for tRNA binding and peptide bond formation. It has been suggested to have peptidyltransferase activity; this is somewhat controversial. Makes several contacts with the 16S rRNA in the 70S ribosome.</text>
</comment>
<comment type="subunit">
    <text evidence="1">Part of the 50S ribosomal subunit. Forms a bridge to the 30S subunit in the 70S ribosome.</text>
</comment>
<comment type="similarity">
    <text evidence="1">Belongs to the universal ribosomal protein uL2 family.</text>
</comment>
<evidence type="ECO:0000255" key="1">
    <source>
        <dbReference type="HAMAP-Rule" id="MF_01320"/>
    </source>
</evidence>
<evidence type="ECO:0000256" key="2">
    <source>
        <dbReference type="SAM" id="MobiDB-lite"/>
    </source>
</evidence>
<evidence type="ECO:0000305" key="3"/>
<sequence length="274" mass="29949">MAIVKCKPTSPGRRHVVKVVNADLHKGKPYAPLLEKNSKNGGRNNNGRITVRHIGGGHKHHYRVIDFKRTKDGIPATVERLEYDPNRSANIALVLYKDGERRYILAPKGVVAGDVIQSGVDAPIKAGNTLPMRNIPVGSTVHNVELKPGKGGQLARSAGAYAQIVARDGAYVTIRLRSGEMRKVLSEGRATIGEVGNSEHMLRELGKAGASRWRGVRPTVRGVVMNPVDHPHGGGEGRTSGGRHPVSPWGMPTKGFKTRKNKRTDKYIVRRRNK</sequence>
<keyword id="KW-0687">Ribonucleoprotein</keyword>
<keyword id="KW-0689">Ribosomal protein</keyword>
<keyword id="KW-0694">RNA-binding</keyword>
<keyword id="KW-0699">rRNA-binding</keyword>
<dbReference type="EMBL" id="BA000031">
    <property type="protein sequence ID" value="BAC58523.1"/>
    <property type="molecule type" value="Genomic_DNA"/>
</dbReference>
<dbReference type="RefSeq" id="NP_796639.1">
    <property type="nucleotide sequence ID" value="NC_004603.1"/>
</dbReference>
<dbReference type="RefSeq" id="WP_005489461.1">
    <property type="nucleotide sequence ID" value="NC_004603.1"/>
</dbReference>
<dbReference type="SMR" id="Q87T10"/>
<dbReference type="GeneID" id="1187727"/>
<dbReference type="KEGG" id="vpa:VP0260"/>
<dbReference type="PATRIC" id="fig|223926.6.peg.251"/>
<dbReference type="eggNOG" id="COG0090">
    <property type="taxonomic scope" value="Bacteria"/>
</dbReference>
<dbReference type="HOGENOM" id="CLU_036235_2_1_6"/>
<dbReference type="Proteomes" id="UP000002493">
    <property type="component" value="Chromosome 1"/>
</dbReference>
<dbReference type="GO" id="GO:0015934">
    <property type="term" value="C:large ribosomal subunit"/>
    <property type="evidence" value="ECO:0007669"/>
    <property type="project" value="InterPro"/>
</dbReference>
<dbReference type="GO" id="GO:0019843">
    <property type="term" value="F:rRNA binding"/>
    <property type="evidence" value="ECO:0007669"/>
    <property type="project" value="UniProtKB-UniRule"/>
</dbReference>
<dbReference type="GO" id="GO:0003735">
    <property type="term" value="F:structural constituent of ribosome"/>
    <property type="evidence" value="ECO:0007669"/>
    <property type="project" value="InterPro"/>
</dbReference>
<dbReference type="GO" id="GO:0016740">
    <property type="term" value="F:transferase activity"/>
    <property type="evidence" value="ECO:0007669"/>
    <property type="project" value="InterPro"/>
</dbReference>
<dbReference type="GO" id="GO:0002181">
    <property type="term" value="P:cytoplasmic translation"/>
    <property type="evidence" value="ECO:0007669"/>
    <property type="project" value="TreeGrafter"/>
</dbReference>
<dbReference type="FunFam" id="2.30.30.30:FF:000001">
    <property type="entry name" value="50S ribosomal protein L2"/>
    <property type="match status" value="1"/>
</dbReference>
<dbReference type="FunFam" id="2.40.50.140:FF:000003">
    <property type="entry name" value="50S ribosomal protein L2"/>
    <property type="match status" value="1"/>
</dbReference>
<dbReference type="FunFam" id="4.10.950.10:FF:000001">
    <property type="entry name" value="50S ribosomal protein L2"/>
    <property type="match status" value="1"/>
</dbReference>
<dbReference type="Gene3D" id="2.30.30.30">
    <property type="match status" value="1"/>
</dbReference>
<dbReference type="Gene3D" id="2.40.50.140">
    <property type="entry name" value="Nucleic acid-binding proteins"/>
    <property type="match status" value="1"/>
</dbReference>
<dbReference type="Gene3D" id="4.10.950.10">
    <property type="entry name" value="Ribosomal protein L2, domain 3"/>
    <property type="match status" value="1"/>
</dbReference>
<dbReference type="HAMAP" id="MF_01320_B">
    <property type="entry name" value="Ribosomal_uL2_B"/>
    <property type="match status" value="1"/>
</dbReference>
<dbReference type="InterPro" id="IPR012340">
    <property type="entry name" value="NA-bd_OB-fold"/>
</dbReference>
<dbReference type="InterPro" id="IPR014722">
    <property type="entry name" value="Rib_uL2_dom2"/>
</dbReference>
<dbReference type="InterPro" id="IPR002171">
    <property type="entry name" value="Ribosomal_uL2"/>
</dbReference>
<dbReference type="InterPro" id="IPR005880">
    <property type="entry name" value="Ribosomal_uL2_bac/org-type"/>
</dbReference>
<dbReference type="InterPro" id="IPR022669">
    <property type="entry name" value="Ribosomal_uL2_C"/>
</dbReference>
<dbReference type="InterPro" id="IPR022671">
    <property type="entry name" value="Ribosomal_uL2_CS"/>
</dbReference>
<dbReference type="InterPro" id="IPR014726">
    <property type="entry name" value="Ribosomal_uL2_dom3"/>
</dbReference>
<dbReference type="InterPro" id="IPR022666">
    <property type="entry name" value="Ribosomal_uL2_RNA-bd_dom"/>
</dbReference>
<dbReference type="InterPro" id="IPR008991">
    <property type="entry name" value="Translation_prot_SH3-like_sf"/>
</dbReference>
<dbReference type="NCBIfam" id="TIGR01171">
    <property type="entry name" value="rplB_bact"/>
    <property type="match status" value="1"/>
</dbReference>
<dbReference type="PANTHER" id="PTHR13691:SF5">
    <property type="entry name" value="LARGE RIBOSOMAL SUBUNIT PROTEIN UL2M"/>
    <property type="match status" value="1"/>
</dbReference>
<dbReference type="PANTHER" id="PTHR13691">
    <property type="entry name" value="RIBOSOMAL PROTEIN L2"/>
    <property type="match status" value="1"/>
</dbReference>
<dbReference type="Pfam" id="PF00181">
    <property type="entry name" value="Ribosomal_L2"/>
    <property type="match status" value="1"/>
</dbReference>
<dbReference type="Pfam" id="PF03947">
    <property type="entry name" value="Ribosomal_L2_C"/>
    <property type="match status" value="1"/>
</dbReference>
<dbReference type="PIRSF" id="PIRSF002158">
    <property type="entry name" value="Ribosomal_L2"/>
    <property type="match status" value="1"/>
</dbReference>
<dbReference type="SMART" id="SM01383">
    <property type="entry name" value="Ribosomal_L2"/>
    <property type="match status" value="1"/>
</dbReference>
<dbReference type="SMART" id="SM01382">
    <property type="entry name" value="Ribosomal_L2_C"/>
    <property type="match status" value="1"/>
</dbReference>
<dbReference type="SUPFAM" id="SSF50249">
    <property type="entry name" value="Nucleic acid-binding proteins"/>
    <property type="match status" value="1"/>
</dbReference>
<dbReference type="SUPFAM" id="SSF50104">
    <property type="entry name" value="Translation proteins SH3-like domain"/>
    <property type="match status" value="1"/>
</dbReference>
<dbReference type="PROSITE" id="PS00467">
    <property type="entry name" value="RIBOSOMAL_L2"/>
    <property type="match status" value="1"/>
</dbReference>